<organism>
    <name type="scientific">Staphylococcus aureus (strain USA300 / TCH1516)</name>
    <dbReference type="NCBI Taxonomy" id="451516"/>
    <lineage>
        <taxon>Bacteria</taxon>
        <taxon>Bacillati</taxon>
        <taxon>Bacillota</taxon>
        <taxon>Bacilli</taxon>
        <taxon>Bacillales</taxon>
        <taxon>Staphylococcaceae</taxon>
        <taxon>Staphylococcus</taxon>
    </lineage>
</organism>
<protein>
    <recommendedName>
        <fullName evidence="1">Exodeoxyribonuclease 7 small subunit</fullName>
        <ecNumber evidence="1">3.1.11.6</ecNumber>
    </recommendedName>
    <alternativeName>
        <fullName evidence="1">Exodeoxyribonuclease VII small subunit</fullName>
        <shortName evidence="1">Exonuclease VII small subunit</shortName>
    </alternativeName>
</protein>
<reference key="1">
    <citation type="journal article" date="2007" name="BMC Microbiol.">
        <title>Subtle genetic changes enhance virulence of methicillin resistant and sensitive Staphylococcus aureus.</title>
        <authorList>
            <person name="Highlander S.K."/>
            <person name="Hulten K.G."/>
            <person name="Qin X."/>
            <person name="Jiang H."/>
            <person name="Yerrapragada S."/>
            <person name="Mason E.O. Jr."/>
            <person name="Shang Y."/>
            <person name="Williams T.M."/>
            <person name="Fortunov R.M."/>
            <person name="Liu Y."/>
            <person name="Igboeli O."/>
            <person name="Petrosino J."/>
            <person name="Tirumalai M."/>
            <person name="Uzman A."/>
            <person name="Fox G.E."/>
            <person name="Cardenas A.M."/>
            <person name="Muzny D.M."/>
            <person name="Hemphill L."/>
            <person name="Ding Y."/>
            <person name="Dugan S."/>
            <person name="Blyth P.R."/>
            <person name="Buhay C.J."/>
            <person name="Dinh H.H."/>
            <person name="Hawes A.C."/>
            <person name="Holder M."/>
            <person name="Kovar C.L."/>
            <person name="Lee S.L."/>
            <person name="Liu W."/>
            <person name="Nazareth L.V."/>
            <person name="Wang Q."/>
            <person name="Zhou J."/>
            <person name="Kaplan S.L."/>
            <person name="Weinstock G.M."/>
        </authorList>
    </citation>
    <scope>NUCLEOTIDE SEQUENCE [LARGE SCALE GENOMIC DNA]</scope>
    <source>
        <strain>USA300 / TCH1516</strain>
    </source>
</reference>
<evidence type="ECO:0000255" key="1">
    <source>
        <dbReference type="HAMAP-Rule" id="MF_00337"/>
    </source>
</evidence>
<dbReference type="EC" id="3.1.11.6" evidence="1"/>
<dbReference type="EMBL" id="CP000730">
    <property type="protein sequence ID" value="ABX29531.1"/>
    <property type="molecule type" value="Genomic_DNA"/>
</dbReference>
<dbReference type="RefSeq" id="WP_000159865.1">
    <property type="nucleotide sequence ID" value="NC_010079.1"/>
</dbReference>
<dbReference type="SMR" id="A8Z462"/>
<dbReference type="KEGG" id="sax:USA300HOU_1524"/>
<dbReference type="HOGENOM" id="CLU_145918_3_2_9"/>
<dbReference type="GO" id="GO:0005829">
    <property type="term" value="C:cytosol"/>
    <property type="evidence" value="ECO:0007669"/>
    <property type="project" value="TreeGrafter"/>
</dbReference>
<dbReference type="GO" id="GO:0009318">
    <property type="term" value="C:exodeoxyribonuclease VII complex"/>
    <property type="evidence" value="ECO:0007669"/>
    <property type="project" value="InterPro"/>
</dbReference>
<dbReference type="GO" id="GO:0008855">
    <property type="term" value="F:exodeoxyribonuclease VII activity"/>
    <property type="evidence" value="ECO:0007669"/>
    <property type="project" value="UniProtKB-UniRule"/>
</dbReference>
<dbReference type="GO" id="GO:0006308">
    <property type="term" value="P:DNA catabolic process"/>
    <property type="evidence" value="ECO:0007669"/>
    <property type="project" value="UniProtKB-UniRule"/>
</dbReference>
<dbReference type="FunFam" id="1.10.287.1040:FF:000006">
    <property type="entry name" value="Exodeoxyribonuclease 7 small subunit"/>
    <property type="match status" value="1"/>
</dbReference>
<dbReference type="Gene3D" id="1.10.287.1040">
    <property type="entry name" value="Exonuclease VII, small subunit"/>
    <property type="match status" value="1"/>
</dbReference>
<dbReference type="HAMAP" id="MF_00337">
    <property type="entry name" value="Exonuc_7_S"/>
    <property type="match status" value="1"/>
</dbReference>
<dbReference type="InterPro" id="IPR003761">
    <property type="entry name" value="Exonuc_VII_S"/>
</dbReference>
<dbReference type="InterPro" id="IPR037004">
    <property type="entry name" value="Exonuc_VII_ssu_sf"/>
</dbReference>
<dbReference type="NCBIfam" id="NF002140">
    <property type="entry name" value="PRK00977.1-4"/>
    <property type="match status" value="1"/>
</dbReference>
<dbReference type="NCBIfam" id="NF010671">
    <property type="entry name" value="PRK14068.1"/>
    <property type="match status" value="1"/>
</dbReference>
<dbReference type="NCBIfam" id="TIGR01280">
    <property type="entry name" value="xseB"/>
    <property type="match status" value="1"/>
</dbReference>
<dbReference type="PANTHER" id="PTHR34137">
    <property type="entry name" value="EXODEOXYRIBONUCLEASE 7 SMALL SUBUNIT"/>
    <property type="match status" value="1"/>
</dbReference>
<dbReference type="PANTHER" id="PTHR34137:SF1">
    <property type="entry name" value="EXODEOXYRIBONUCLEASE 7 SMALL SUBUNIT"/>
    <property type="match status" value="1"/>
</dbReference>
<dbReference type="Pfam" id="PF02609">
    <property type="entry name" value="Exonuc_VII_S"/>
    <property type="match status" value="1"/>
</dbReference>
<dbReference type="PIRSF" id="PIRSF006488">
    <property type="entry name" value="Exonuc_VII_S"/>
    <property type="match status" value="1"/>
</dbReference>
<dbReference type="SUPFAM" id="SSF116842">
    <property type="entry name" value="XseB-like"/>
    <property type="match status" value="1"/>
</dbReference>
<keyword id="KW-0963">Cytoplasm</keyword>
<keyword id="KW-0269">Exonuclease</keyword>
<keyword id="KW-0378">Hydrolase</keyword>
<keyword id="KW-0540">Nuclease</keyword>
<gene>
    <name evidence="1" type="primary">xseB</name>
    <name type="ordered locus">USA300HOU_1524</name>
</gene>
<comment type="function">
    <text evidence="1">Bidirectionally degrades single-stranded DNA into large acid-insoluble oligonucleotides, which are then degraded further into small acid-soluble oligonucleotides.</text>
</comment>
<comment type="catalytic activity">
    <reaction evidence="1">
        <text>Exonucleolytic cleavage in either 5'- to 3'- or 3'- to 5'-direction to yield nucleoside 5'-phosphates.</text>
        <dbReference type="EC" id="3.1.11.6"/>
    </reaction>
</comment>
<comment type="subunit">
    <text evidence="1">Heterooligomer composed of large and small subunits.</text>
</comment>
<comment type="subcellular location">
    <subcellularLocation>
        <location evidence="1">Cytoplasm</location>
    </subcellularLocation>
</comment>
<comment type="similarity">
    <text evidence="1">Belongs to the XseB family.</text>
</comment>
<feature type="chain" id="PRO_1000079295" description="Exodeoxyribonuclease 7 small subunit">
    <location>
        <begin position="1"/>
        <end position="76"/>
    </location>
</feature>
<sequence>MTKETQSFEEMMQELEQIVQKLDNETVSLEESLDLYQRGMKLSAACDTTLKNAEKKVNDLIKEEAEDVKNDESTDE</sequence>
<name>EX7S_STAAT</name>
<accession>A8Z462</accession>
<proteinExistence type="inferred from homology"/>